<evidence type="ECO:0000255" key="1">
    <source>
        <dbReference type="HAMAP-Rule" id="MF_00038"/>
    </source>
</evidence>
<comment type="function">
    <text evidence="1">Catalyzes the initial step of the lipid cycle reactions in the biosynthesis of the cell wall peptidoglycan: transfers peptidoglycan precursor phospho-MurNAc-pentapeptide from UDP-MurNAc-pentapeptide onto the lipid carrier undecaprenyl phosphate, yielding undecaprenyl-pyrophosphoryl-MurNAc-pentapeptide, known as lipid I.</text>
</comment>
<comment type="catalytic activity">
    <reaction evidence="1">
        <text>UDP-N-acetyl-alpha-D-muramoyl-L-alanyl-gamma-D-glutamyl-meso-2,6-diaminopimeloyl-D-alanyl-D-alanine + di-trans,octa-cis-undecaprenyl phosphate = di-trans,octa-cis-undecaprenyl diphospho-N-acetyl-alpha-D-muramoyl-L-alanyl-D-glutamyl-meso-2,6-diaminopimeloyl-D-alanyl-D-alanine + UMP</text>
        <dbReference type="Rhea" id="RHEA:28386"/>
        <dbReference type="ChEBI" id="CHEBI:57865"/>
        <dbReference type="ChEBI" id="CHEBI:60392"/>
        <dbReference type="ChEBI" id="CHEBI:61386"/>
        <dbReference type="ChEBI" id="CHEBI:61387"/>
        <dbReference type="EC" id="2.7.8.13"/>
    </reaction>
</comment>
<comment type="cofactor">
    <cofactor evidence="1">
        <name>Mg(2+)</name>
        <dbReference type="ChEBI" id="CHEBI:18420"/>
    </cofactor>
</comment>
<comment type="pathway">
    <text evidence="1">Cell wall biogenesis; peptidoglycan biosynthesis.</text>
</comment>
<comment type="subcellular location">
    <subcellularLocation>
        <location evidence="1">Cell inner membrane</location>
        <topology evidence="1">Multi-pass membrane protein</topology>
    </subcellularLocation>
</comment>
<comment type="similarity">
    <text evidence="1">Belongs to the glycosyltransferase 4 family. MraY subfamily.</text>
</comment>
<sequence length="422" mass="47026">MLYYLFQYLEKFDFPGAGMFGYVSFRSLMAIILSLLISAIFGEYFINLLKRKQITETQRDASIDPFNVKKVGVPTMGGIIIIVAILIPCLLLGKLHNIYMILMLITTIWLGTLGFLDDYIKVFRKDKEGLHGKFKIIGQVGLGLIVGLTLYLSPSVVIRENVEIQRGGEIVEVVHKEQDQKSTKTTIPFFKNNNLDYADFVGFLGNNAQAVGWIIFVLVTIFVVTAVSNGANLNDGMDGMAAGNSAIIGLTLGILAYVSSHIEYAGYLNIMYIPGSEELVIFICSFIGALIGFLWYNAFPAQVFMGDTGSLTIGGIIAVFAIIIHKELLIPILCGIFLVENLSVILQVRYFKSGKKKGHLQRVFKRAPIHDHFRTTLAQLDPNCSYLFMKPNSVFHESKITVRFWIVTIVLAAITIITLKIR</sequence>
<keyword id="KW-0131">Cell cycle</keyword>
<keyword id="KW-0132">Cell division</keyword>
<keyword id="KW-0997">Cell inner membrane</keyword>
<keyword id="KW-1003">Cell membrane</keyword>
<keyword id="KW-0133">Cell shape</keyword>
<keyword id="KW-0961">Cell wall biogenesis/degradation</keyword>
<keyword id="KW-0460">Magnesium</keyword>
<keyword id="KW-0472">Membrane</keyword>
<keyword id="KW-0479">Metal-binding</keyword>
<keyword id="KW-0573">Peptidoglycan synthesis</keyword>
<keyword id="KW-0808">Transferase</keyword>
<keyword id="KW-0812">Transmembrane</keyword>
<keyword id="KW-1133">Transmembrane helix</keyword>
<organism>
    <name type="scientific">Phocaeicola vulgatus (strain ATCC 8482 / DSM 1447 / JCM 5826 / CCUG 4940 / NBRC 14291 / NCTC 11154)</name>
    <name type="common">Bacteroides vulgatus</name>
    <dbReference type="NCBI Taxonomy" id="435590"/>
    <lineage>
        <taxon>Bacteria</taxon>
        <taxon>Pseudomonadati</taxon>
        <taxon>Bacteroidota</taxon>
        <taxon>Bacteroidia</taxon>
        <taxon>Bacteroidales</taxon>
        <taxon>Bacteroidaceae</taxon>
        <taxon>Phocaeicola</taxon>
    </lineage>
</organism>
<gene>
    <name evidence="1" type="primary">mraY</name>
    <name type="ordered locus">BVU_1400</name>
</gene>
<feature type="chain" id="PRO_1000074532" description="Phospho-N-acetylmuramoyl-pentapeptide-transferase">
    <location>
        <begin position="1"/>
        <end position="422"/>
    </location>
</feature>
<feature type="transmembrane region" description="Helical" evidence="1">
    <location>
        <begin position="28"/>
        <end position="48"/>
    </location>
</feature>
<feature type="transmembrane region" description="Helical" evidence="1">
    <location>
        <begin position="71"/>
        <end position="91"/>
    </location>
</feature>
<feature type="transmembrane region" description="Helical" evidence="1">
    <location>
        <begin position="95"/>
        <end position="115"/>
    </location>
</feature>
<feature type="transmembrane region" description="Helical" evidence="1">
    <location>
        <begin position="136"/>
        <end position="156"/>
    </location>
</feature>
<feature type="transmembrane region" description="Helical" evidence="1">
    <location>
        <begin position="208"/>
        <end position="228"/>
    </location>
</feature>
<feature type="transmembrane region" description="Helical" evidence="1">
    <location>
        <begin position="239"/>
        <end position="259"/>
    </location>
</feature>
<feature type="transmembrane region" description="Helical" evidence="1">
    <location>
        <begin position="279"/>
        <end position="299"/>
    </location>
</feature>
<feature type="transmembrane region" description="Helical" evidence="1">
    <location>
        <begin position="313"/>
        <end position="333"/>
    </location>
</feature>
<feature type="transmembrane region" description="Helical" evidence="1">
    <location>
        <begin position="399"/>
        <end position="419"/>
    </location>
</feature>
<dbReference type="EC" id="2.7.8.13" evidence="1"/>
<dbReference type="EMBL" id="CP000139">
    <property type="protein sequence ID" value="ABR39088.1"/>
    <property type="molecule type" value="Genomic_DNA"/>
</dbReference>
<dbReference type="RefSeq" id="WP_011965168.1">
    <property type="nucleotide sequence ID" value="NC_009614.1"/>
</dbReference>
<dbReference type="SMR" id="A6L074"/>
<dbReference type="STRING" id="435590.BVU_1400"/>
<dbReference type="PaxDb" id="435590-BVU_1400"/>
<dbReference type="GeneID" id="5302366"/>
<dbReference type="KEGG" id="bvu:BVU_1400"/>
<dbReference type="PATRIC" id="fig|435590.9.peg.1461"/>
<dbReference type="eggNOG" id="COG0472">
    <property type="taxonomic scope" value="Bacteria"/>
</dbReference>
<dbReference type="HOGENOM" id="CLU_023982_0_0_10"/>
<dbReference type="BioCyc" id="BVUL435590:G1G59-1463-MONOMER"/>
<dbReference type="UniPathway" id="UPA00219"/>
<dbReference type="Proteomes" id="UP000002861">
    <property type="component" value="Chromosome"/>
</dbReference>
<dbReference type="GO" id="GO:0005886">
    <property type="term" value="C:plasma membrane"/>
    <property type="evidence" value="ECO:0007669"/>
    <property type="project" value="UniProtKB-SubCell"/>
</dbReference>
<dbReference type="GO" id="GO:0046872">
    <property type="term" value="F:metal ion binding"/>
    <property type="evidence" value="ECO:0007669"/>
    <property type="project" value="UniProtKB-KW"/>
</dbReference>
<dbReference type="GO" id="GO:0008963">
    <property type="term" value="F:phospho-N-acetylmuramoyl-pentapeptide-transferase activity"/>
    <property type="evidence" value="ECO:0007669"/>
    <property type="project" value="UniProtKB-UniRule"/>
</dbReference>
<dbReference type="GO" id="GO:0051992">
    <property type="term" value="F:UDP-N-acetylmuramoyl-L-alanyl-D-glutamyl-meso-2,6-diaminopimelyl-D-alanyl-D-alanine:undecaprenyl-phosphate transferase activity"/>
    <property type="evidence" value="ECO:0007669"/>
    <property type="project" value="RHEA"/>
</dbReference>
<dbReference type="GO" id="GO:0051301">
    <property type="term" value="P:cell division"/>
    <property type="evidence" value="ECO:0007669"/>
    <property type="project" value="UniProtKB-KW"/>
</dbReference>
<dbReference type="GO" id="GO:0071555">
    <property type="term" value="P:cell wall organization"/>
    <property type="evidence" value="ECO:0007669"/>
    <property type="project" value="UniProtKB-KW"/>
</dbReference>
<dbReference type="GO" id="GO:0009252">
    <property type="term" value="P:peptidoglycan biosynthetic process"/>
    <property type="evidence" value="ECO:0007669"/>
    <property type="project" value="UniProtKB-UniRule"/>
</dbReference>
<dbReference type="GO" id="GO:0008360">
    <property type="term" value="P:regulation of cell shape"/>
    <property type="evidence" value="ECO:0007669"/>
    <property type="project" value="UniProtKB-KW"/>
</dbReference>
<dbReference type="CDD" id="cd06852">
    <property type="entry name" value="GT_MraY"/>
    <property type="match status" value="1"/>
</dbReference>
<dbReference type="HAMAP" id="MF_00038">
    <property type="entry name" value="MraY"/>
    <property type="match status" value="1"/>
</dbReference>
<dbReference type="InterPro" id="IPR000715">
    <property type="entry name" value="Glycosyl_transferase_4"/>
</dbReference>
<dbReference type="InterPro" id="IPR003524">
    <property type="entry name" value="PNAcMuramoyl-5peptid_Trfase"/>
</dbReference>
<dbReference type="InterPro" id="IPR018480">
    <property type="entry name" value="PNAcMuramoyl-5peptid_Trfase_CS"/>
</dbReference>
<dbReference type="NCBIfam" id="TIGR00445">
    <property type="entry name" value="mraY"/>
    <property type="match status" value="1"/>
</dbReference>
<dbReference type="PANTHER" id="PTHR22926">
    <property type="entry name" value="PHOSPHO-N-ACETYLMURAMOYL-PENTAPEPTIDE-TRANSFERASE"/>
    <property type="match status" value="1"/>
</dbReference>
<dbReference type="PANTHER" id="PTHR22926:SF5">
    <property type="entry name" value="PHOSPHO-N-ACETYLMURAMOYL-PENTAPEPTIDE-TRANSFERASE HOMOLOG"/>
    <property type="match status" value="1"/>
</dbReference>
<dbReference type="Pfam" id="PF00953">
    <property type="entry name" value="Glycos_transf_4"/>
    <property type="match status" value="1"/>
</dbReference>
<dbReference type="PROSITE" id="PS01347">
    <property type="entry name" value="MRAY_1"/>
    <property type="match status" value="1"/>
</dbReference>
<dbReference type="PROSITE" id="PS01348">
    <property type="entry name" value="MRAY_2"/>
    <property type="match status" value="1"/>
</dbReference>
<proteinExistence type="inferred from homology"/>
<protein>
    <recommendedName>
        <fullName evidence="1">Phospho-N-acetylmuramoyl-pentapeptide-transferase</fullName>
        <ecNumber evidence="1">2.7.8.13</ecNumber>
    </recommendedName>
    <alternativeName>
        <fullName evidence="1">UDP-MurNAc-pentapeptide phosphotransferase</fullName>
    </alternativeName>
</protein>
<reference key="1">
    <citation type="journal article" date="2007" name="PLoS Biol.">
        <title>Evolution of symbiotic bacteria in the distal human intestine.</title>
        <authorList>
            <person name="Xu J."/>
            <person name="Mahowald M.A."/>
            <person name="Ley R.E."/>
            <person name="Lozupone C.A."/>
            <person name="Hamady M."/>
            <person name="Martens E.C."/>
            <person name="Henrissat B."/>
            <person name="Coutinho P.M."/>
            <person name="Minx P."/>
            <person name="Latreille P."/>
            <person name="Cordum H."/>
            <person name="Van Brunt A."/>
            <person name="Kim K."/>
            <person name="Fulton R.S."/>
            <person name="Fulton L.A."/>
            <person name="Clifton S.W."/>
            <person name="Wilson R.K."/>
            <person name="Knight R.D."/>
            <person name="Gordon J.I."/>
        </authorList>
    </citation>
    <scope>NUCLEOTIDE SEQUENCE [LARGE SCALE GENOMIC DNA]</scope>
    <source>
        <strain>ATCC 8482 / DSM 1447 / JCM 5826 / CCUG 4940 / NBRC 14291 / NCTC 11154</strain>
    </source>
</reference>
<accession>A6L074</accession>
<name>MRAY_PHOV8</name>